<protein>
    <recommendedName>
        <fullName evidence="4">MFS-type transporter R5</fullName>
    </recommendedName>
    <alternativeName>
        <fullName evidence="4">Squalestatin S1 biosynthesis cluster protein R5</fullName>
    </alternativeName>
</protein>
<keyword id="KW-0325">Glycoprotein</keyword>
<keyword id="KW-0472">Membrane</keyword>
<keyword id="KW-0812">Transmembrane</keyword>
<keyword id="KW-1133">Transmembrane helix</keyword>
<keyword id="KW-0813">Transport</keyword>
<gene>
    <name evidence="4" type="primary">R5</name>
</gene>
<feature type="chain" id="PRO_0000447832" description="MFS-type transporter R5">
    <location>
        <begin position="1"/>
        <end position="523"/>
    </location>
</feature>
<feature type="transmembrane region" description="Helical" evidence="1">
    <location>
        <begin position="183"/>
        <end position="203"/>
    </location>
</feature>
<feature type="transmembrane region" description="Helical" evidence="1">
    <location>
        <begin position="211"/>
        <end position="231"/>
    </location>
</feature>
<feature type="transmembrane region" description="Helical" evidence="1">
    <location>
        <begin position="291"/>
        <end position="311"/>
    </location>
</feature>
<feature type="transmembrane region" description="Helical" evidence="1">
    <location>
        <begin position="319"/>
        <end position="339"/>
    </location>
</feature>
<feature type="transmembrane region" description="Helical" evidence="1">
    <location>
        <begin position="381"/>
        <end position="401"/>
    </location>
</feature>
<feature type="transmembrane region" description="Helical" evidence="1">
    <location>
        <begin position="408"/>
        <end position="428"/>
    </location>
</feature>
<feature type="transmembrane region" description="Helical" evidence="1">
    <location>
        <begin position="443"/>
        <end position="463"/>
    </location>
</feature>
<feature type="transmembrane region" description="Helical" evidence="1">
    <location>
        <begin position="470"/>
        <end position="490"/>
    </location>
</feature>
<feature type="region of interest" description="Disordered" evidence="3">
    <location>
        <begin position="19"/>
        <end position="42"/>
    </location>
</feature>
<feature type="compositionally biased region" description="Polar residues" evidence="3">
    <location>
        <begin position="21"/>
        <end position="38"/>
    </location>
</feature>
<feature type="glycosylation site" description="N-linked (GlcNAc...) asparagine" evidence="2">
    <location>
        <position position="35"/>
    </location>
</feature>
<feature type="glycosylation site" description="N-linked (GlcNAc...) asparagine" evidence="2">
    <location>
        <position position="94"/>
    </location>
</feature>
<feature type="glycosylation site" description="N-linked (GlcNAc...) asparagine" evidence="2">
    <location>
        <position position="143"/>
    </location>
</feature>
<feature type="glycosylation site" description="N-linked (GlcNAc...) asparagine" evidence="2">
    <location>
        <position position="235"/>
    </location>
</feature>
<feature type="glycosylation site" description="N-linked (GlcNAc...) asparagine" evidence="2">
    <location>
        <position position="250"/>
    </location>
</feature>
<name>MFR5_PHOSM</name>
<proteinExistence type="inferred from homology"/>
<comment type="function">
    <text evidence="6">MFS-type transporter; part of the gene cluster that mediates the biosynthesis of squalestatin S1 (SQS1, also known as zaragozic acid A), a heavily oxidized fungal polyketide that offers potent cholesterol lowering activity by targeting squalene synthase (SS).</text>
</comment>
<comment type="subcellular location">
    <subcellularLocation>
        <location evidence="1">Membrane</location>
        <topology evidence="1">Multi-pass membrane protein</topology>
    </subcellularLocation>
</comment>
<comment type="similarity">
    <text evidence="5">Belongs to the major facilitator superfamily.</text>
</comment>
<accession>A0A3G1DIQ9</accession>
<reference key="1">
    <citation type="journal article" date="2016" name="Chem. Commun. (Camb.)">
        <title>Identification of genes encoding squalestatin S1 biosynthesis and in vitro production of new squalestatin analogues.</title>
        <authorList>
            <person name="Bonsch B."/>
            <person name="Belt V."/>
            <person name="Bartel C."/>
            <person name="Duensing N."/>
            <person name="Koziol M."/>
            <person name="Lazarus C.M."/>
            <person name="Bailey A.M."/>
            <person name="Simpson T.J."/>
            <person name="Cox R.J."/>
        </authorList>
    </citation>
    <scope>NUCLEOTIDE SEQUENCE [GENOMIC DNA]</scope>
    <scope>FUNCTION</scope>
</reference>
<organism>
    <name type="scientific">Phoma sp. (strain ATCC 20986 / MF5453)</name>
    <dbReference type="NCBI Taxonomy" id="1828523"/>
    <lineage>
        <taxon>Eukaryota</taxon>
        <taxon>Fungi</taxon>
        <taxon>Dikarya</taxon>
        <taxon>Ascomycota</taxon>
        <taxon>Pezizomycotina</taxon>
        <taxon>Dothideomycetes</taxon>
        <taxon>Pleosporomycetidae</taxon>
        <taxon>Pleosporales</taxon>
        <taxon>Pleosporineae</taxon>
        <taxon>Didymellaceae</taxon>
        <taxon>Phoma</taxon>
    </lineage>
</organism>
<sequence>MNAATSITQAPVADVELKQLNEATAQRESATNNPNDSSSIDERPIHSALSESQRSALLAVASFAAAISPASTTTYYPAITTLARDLDVSITQINLSISVYQIFQGLAPTVAAALSDRYGRRPVYLGCLFINIAANLGLARQENYTSLMVLRCLQSSSSSGTVALGQAVMDDLVTSEERGKYMAYLTLGLVMGPALGPLIGGLLSQYLGWRAIFWFLMILGGFFFVLTFTFFRETNRSIVGDGSVPPPKWNRSLVQILRKDKLVPNRESLQKKRIGVNPLASVQILCNKENFIVCMYGALLFGGYASVISIFATQLEERYGYSQVQVGLCYLPFGVGSILSRWTAGKMIDWNFKREAEKQGLKIVKNRQQDLSQYDIEKARLTISFPMIFATCGFVVAYGWLMQYNTHVASVLVIVFLIANVFTGVLIANSALLNDLNPGNGAALGAAMNLTRCLMGAGGVAAVTPLINKIGIGYTATATAGVWLAVLPALYVVYSKGYTWRKAALRSSAQGRGEGSRVASPSP</sequence>
<dbReference type="EMBL" id="KU946987">
    <property type="protein sequence ID" value="AMY15073.1"/>
    <property type="molecule type" value="Genomic_DNA"/>
</dbReference>
<dbReference type="SMR" id="A0A3G1DIQ9"/>
<dbReference type="GlyCosmos" id="A0A3G1DIQ9">
    <property type="glycosylation" value="5 sites, No reported glycans"/>
</dbReference>
<dbReference type="GO" id="GO:0005886">
    <property type="term" value="C:plasma membrane"/>
    <property type="evidence" value="ECO:0007669"/>
    <property type="project" value="TreeGrafter"/>
</dbReference>
<dbReference type="GO" id="GO:0022857">
    <property type="term" value="F:transmembrane transporter activity"/>
    <property type="evidence" value="ECO:0007669"/>
    <property type="project" value="InterPro"/>
</dbReference>
<dbReference type="GO" id="GO:0140115">
    <property type="term" value="P:export across plasma membrane"/>
    <property type="evidence" value="ECO:0007669"/>
    <property type="project" value="UniProtKB-ARBA"/>
</dbReference>
<dbReference type="GO" id="GO:0042908">
    <property type="term" value="P:xenobiotic transport"/>
    <property type="evidence" value="ECO:0007669"/>
    <property type="project" value="UniProtKB-ARBA"/>
</dbReference>
<dbReference type="FunFam" id="1.20.1250.20:FF:000172">
    <property type="entry name" value="MFS multidrug resistance transporter"/>
    <property type="match status" value="1"/>
</dbReference>
<dbReference type="FunFam" id="1.20.1720.10:FF:000009">
    <property type="entry name" value="MFS multidrug transporter"/>
    <property type="match status" value="1"/>
</dbReference>
<dbReference type="Gene3D" id="1.20.1250.20">
    <property type="entry name" value="MFS general substrate transporter like domains"/>
    <property type="match status" value="1"/>
</dbReference>
<dbReference type="InterPro" id="IPR011701">
    <property type="entry name" value="MFS"/>
</dbReference>
<dbReference type="InterPro" id="IPR020846">
    <property type="entry name" value="MFS_dom"/>
</dbReference>
<dbReference type="InterPro" id="IPR036259">
    <property type="entry name" value="MFS_trans_sf"/>
</dbReference>
<dbReference type="InterPro" id="IPR005829">
    <property type="entry name" value="Sugar_transporter_CS"/>
</dbReference>
<dbReference type="PANTHER" id="PTHR23502">
    <property type="entry name" value="MAJOR FACILITATOR SUPERFAMILY"/>
    <property type="match status" value="1"/>
</dbReference>
<dbReference type="PANTHER" id="PTHR23502:SF51">
    <property type="entry name" value="QUINIDINE RESISTANCE PROTEIN 1-RELATED"/>
    <property type="match status" value="1"/>
</dbReference>
<dbReference type="Pfam" id="PF07690">
    <property type="entry name" value="MFS_1"/>
    <property type="match status" value="1"/>
</dbReference>
<dbReference type="SUPFAM" id="SSF103473">
    <property type="entry name" value="MFS general substrate transporter"/>
    <property type="match status" value="1"/>
</dbReference>
<dbReference type="PROSITE" id="PS50850">
    <property type="entry name" value="MFS"/>
    <property type="match status" value="1"/>
</dbReference>
<dbReference type="PROSITE" id="PS00216">
    <property type="entry name" value="SUGAR_TRANSPORT_1"/>
    <property type="match status" value="1"/>
</dbReference>
<evidence type="ECO:0000255" key="1"/>
<evidence type="ECO:0000255" key="2">
    <source>
        <dbReference type="PROSITE-ProRule" id="PRU00498"/>
    </source>
</evidence>
<evidence type="ECO:0000256" key="3">
    <source>
        <dbReference type="SAM" id="MobiDB-lite"/>
    </source>
</evidence>
<evidence type="ECO:0000303" key="4">
    <source>
    </source>
</evidence>
<evidence type="ECO:0000305" key="5"/>
<evidence type="ECO:0000305" key="6">
    <source>
    </source>
</evidence>